<accession>B5XXN1</accession>
<reference key="1">
    <citation type="journal article" date="2008" name="PLoS Genet.">
        <title>Complete genome sequence of the N2-fixing broad host range endophyte Klebsiella pneumoniae 342 and virulence predictions verified in mice.</title>
        <authorList>
            <person name="Fouts D.E."/>
            <person name="Tyler H.L."/>
            <person name="DeBoy R.T."/>
            <person name="Daugherty S."/>
            <person name="Ren Q."/>
            <person name="Badger J.H."/>
            <person name="Durkin A.S."/>
            <person name="Huot H."/>
            <person name="Shrivastava S."/>
            <person name="Kothari S."/>
            <person name="Dodson R.J."/>
            <person name="Mohamoud Y."/>
            <person name="Khouri H."/>
            <person name="Roesch L.F.W."/>
            <person name="Krogfelt K.A."/>
            <person name="Struve C."/>
            <person name="Triplett E.W."/>
            <person name="Methe B.A."/>
        </authorList>
    </citation>
    <scope>NUCLEOTIDE SEQUENCE [LARGE SCALE GENOMIC DNA]</scope>
    <source>
        <strain>342</strain>
    </source>
</reference>
<name>RUTB_KLEP3</name>
<proteinExistence type="inferred from homology"/>
<feature type="chain" id="PRO_0000402688" description="Ureidoacrylate amidohydrolase RutB">
    <location>
        <begin position="1"/>
        <end position="236"/>
    </location>
</feature>
<feature type="active site" description="Proton acceptor" evidence="1">
    <location>
        <position position="24"/>
    </location>
</feature>
<feature type="active site" evidence="1">
    <location>
        <position position="133"/>
    </location>
</feature>
<feature type="active site" description="Nucleophile" evidence="1">
    <location>
        <position position="166"/>
    </location>
</feature>
<keyword id="KW-0378">Hydrolase</keyword>
<protein>
    <recommendedName>
        <fullName evidence="1">Ureidoacrylate amidohydrolase RutB</fullName>
        <ecNumber evidence="1">3.5.1.110</ecNumber>
    </recommendedName>
</protein>
<organism>
    <name type="scientific">Klebsiella pneumoniae (strain 342)</name>
    <dbReference type="NCBI Taxonomy" id="507522"/>
    <lineage>
        <taxon>Bacteria</taxon>
        <taxon>Pseudomonadati</taxon>
        <taxon>Pseudomonadota</taxon>
        <taxon>Gammaproteobacteria</taxon>
        <taxon>Enterobacterales</taxon>
        <taxon>Enterobacteriaceae</taxon>
        <taxon>Klebsiella/Raoultella group</taxon>
        <taxon>Klebsiella</taxon>
        <taxon>Klebsiella pneumoniae complex</taxon>
    </lineage>
</organism>
<sequence length="236" mass="25861">MITLPARPESLTFAPQQSALIVVDMQNAYASQGGYLDLAGFDVSATRPVIVNINTAVAAARAAGMLIIWFQNGWDDQYVEAGGPGSPNYHKSNALKTMRQRPELQGKLLAKGGWDYQLVDELTPQEGDIVLPKPRYSGFFNTPLDSILRSRGIRHLVFTGIATNVCVESTLRDGFFLEYFGIVLEDATHQAGPAFAQQAALFNIETFFGWVSDVESFCHALSPATPLSLAKEKRYA</sequence>
<comment type="function">
    <text evidence="1">Hydrolyzes ureidoacrylate to form aminoacrylate and carbamate. The carbamate hydrolyzes spontaneously, thereby releasing one of the nitrogen atoms of the pyrimidine ring as ammonia and one of its carbon atoms as CO2.</text>
</comment>
<comment type="catalytic activity">
    <reaction evidence="1">
        <text>(Z)-3-ureidoacrylate + H2O + H(+) = (Z)-3-aminoacrylate + NH4(+) + CO2</text>
        <dbReference type="Rhea" id="RHEA:42624"/>
        <dbReference type="ChEBI" id="CHEBI:15377"/>
        <dbReference type="ChEBI" id="CHEBI:15378"/>
        <dbReference type="ChEBI" id="CHEBI:16526"/>
        <dbReference type="ChEBI" id="CHEBI:28938"/>
        <dbReference type="ChEBI" id="CHEBI:59891"/>
        <dbReference type="ChEBI" id="CHEBI:59894"/>
        <dbReference type="EC" id="3.5.1.110"/>
    </reaction>
</comment>
<comment type="catalytic activity">
    <reaction evidence="1">
        <text>(Z)-3-ureidoacrylate + H2O = (Z)-3-aminoacrylate + carbamate + H(+)</text>
        <dbReference type="Rhea" id="RHEA:31603"/>
        <dbReference type="ChEBI" id="CHEBI:13941"/>
        <dbReference type="ChEBI" id="CHEBI:15377"/>
        <dbReference type="ChEBI" id="CHEBI:15378"/>
        <dbReference type="ChEBI" id="CHEBI:59891"/>
        <dbReference type="ChEBI" id="CHEBI:59894"/>
    </reaction>
</comment>
<comment type="catalytic activity">
    <reaction evidence="1">
        <text>(Z)-2-methylureidoacrylate + H2O + H(+) = (Z)-2-methylaminoacrylate + NH4(+) + CO2</text>
        <dbReference type="Rhea" id="RHEA:42620"/>
        <dbReference type="ChEBI" id="CHEBI:15377"/>
        <dbReference type="ChEBI" id="CHEBI:15378"/>
        <dbReference type="ChEBI" id="CHEBI:16526"/>
        <dbReference type="ChEBI" id="CHEBI:28938"/>
        <dbReference type="ChEBI" id="CHEBI:143783"/>
        <dbReference type="ChEBI" id="CHEBI:145735"/>
        <dbReference type="EC" id="3.5.1.110"/>
    </reaction>
</comment>
<comment type="similarity">
    <text evidence="1">Belongs to the isochorismatase family. RutB subfamily.</text>
</comment>
<evidence type="ECO:0000255" key="1">
    <source>
        <dbReference type="HAMAP-Rule" id="MF_00830"/>
    </source>
</evidence>
<dbReference type="EC" id="3.5.1.110" evidence="1"/>
<dbReference type="EMBL" id="CP000964">
    <property type="protein sequence ID" value="ACI10874.1"/>
    <property type="molecule type" value="Genomic_DNA"/>
</dbReference>
<dbReference type="SMR" id="B5XXN1"/>
<dbReference type="KEGG" id="kpe:KPK_3521"/>
<dbReference type="HOGENOM" id="CLU_068979_8_0_6"/>
<dbReference type="Proteomes" id="UP000001734">
    <property type="component" value="Chromosome"/>
</dbReference>
<dbReference type="GO" id="GO:0016811">
    <property type="term" value="F:hydrolase activity, acting on carbon-nitrogen (but not peptide) bonds, in linear amides"/>
    <property type="evidence" value="ECO:0007669"/>
    <property type="project" value="UniProtKB-UniRule"/>
</dbReference>
<dbReference type="GO" id="GO:0019740">
    <property type="term" value="P:nitrogen utilization"/>
    <property type="evidence" value="ECO:0007669"/>
    <property type="project" value="UniProtKB-UniRule"/>
</dbReference>
<dbReference type="GO" id="GO:0006212">
    <property type="term" value="P:uracil catabolic process"/>
    <property type="evidence" value="ECO:0007669"/>
    <property type="project" value="UniProtKB-UniRule"/>
</dbReference>
<dbReference type="CDD" id="cd00431">
    <property type="entry name" value="cysteine_hydrolases"/>
    <property type="match status" value="1"/>
</dbReference>
<dbReference type="Gene3D" id="3.40.50.850">
    <property type="entry name" value="Isochorismatase-like"/>
    <property type="match status" value="1"/>
</dbReference>
<dbReference type="HAMAP" id="MF_00830">
    <property type="entry name" value="RutB"/>
    <property type="match status" value="1"/>
</dbReference>
<dbReference type="InterPro" id="IPR000868">
    <property type="entry name" value="Isochorismatase-like_dom"/>
</dbReference>
<dbReference type="InterPro" id="IPR050272">
    <property type="entry name" value="Isochorismatase-like_hydrls"/>
</dbReference>
<dbReference type="InterPro" id="IPR036380">
    <property type="entry name" value="Isochorismatase-like_sf"/>
</dbReference>
<dbReference type="InterPro" id="IPR019916">
    <property type="entry name" value="RutB"/>
</dbReference>
<dbReference type="NCBIfam" id="TIGR03614">
    <property type="entry name" value="RutB"/>
    <property type="match status" value="1"/>
</dbReference>
<dbReference type="PANTHER" id="PTHR43540:SF6">
    <property type="entry name" value="ISOCHORISMATASE-LIKE DOMAIN-CONTAINING PROTEIN"/>
    <property type="match status" value="1"/>
</dbReference>
<dbReference type="PANTHER" id="PTHR43540">
    <property type="entry name" value="PEROXYUREIDOACRYLATE/UREIDOACRYLATE AMIDOHYDROLASE-RELATED"/>
    <property type="match status" value="1"/>
</dbReference>
<dbReference type="Pfam" id="PF00857">
    <property type="entry name" value="Isochorismatase"/>
    <property type="match status" value="1"/>
</dbReference>
<dbReference type="SUPFAM" id="SSF52499">
    <property type="entry name" value="Isochorismatase-like hydrolases"/>
    <property type="match status" value="1"/>
</dbReference>
<gene>
    <name evidence="1" type="primary">rutB</name>
    <name type="ordered locus">KPK_3521</name>
</gene>